<accession>Q3ZX09</accession>
<name>PTH_DEHMC</name>
<comment type="function">
    <text evidence="1">Hydrolyzes ribosome-free peptidyl-tRNAs (with 1 or more amino acids incorporated), which drop off the ribosome during protein synthesis, or as a result of ribosome stalling.</text>
</comment>
<comment type="function">
    <text evidence="1">Catalyzes the release of premature peptidyl moieties from peptidyl-tRNA molecules trapped in stalled 50S ribosomal subunits, and thus maintains levels of free tRNAs and 50S ribosomes.</text>
</comment>
<comment type="catalytic activity">
    <reaction evidence="1">
        <text>an N-acyl-L-alpha-aminoacyl-tRNA + H2O = an N-acyl-L-amino acid + a tRNA + H(+)</text>
        <dbReference type="Rhea" id="RHEA:54448"/>
        <dbReference type="Rhea" id="RHEA-COMP:10123"/>
        <dbReference type="Rhea" id="RHEA-COMP:13883"/>
        <dbReference type="ChEBI" id="CHEBI:15377"/>
        <dbReference type="ChEBI" id="CHEBI:15378"/>
        <dbReference type="ChEBI" id="CHEBI:59874"/>
        <dbReference type="ChEBI" id="CHEBI:78442"/>
        <dbReference type="ChEBI" id="CHEBI:138191"/>
        <dbReference type="EC" id="3.1.1.29"/>
    </reaction>
</comment>
<comment type="subunit">
    <text evidence="1">Monomer.</text>
</comment>
<comment type="subcellular location">
    <subcellularLocation>
        <location evidence="1">Cytoplasm</location>
    </subcellularLocation>
</comment>
<comment type="similarity">
    <text evidence="1">Belongs to the PTH family.</text>
</comment>
<protein>
    <recommendedName>
        <fullName evidence="1">Peptidyl-tRNA hydrolase</fullName>
        <shortName evidence="1">Pth</shortName>
        <ecNumber evidence="1">3.1.1.29</ecNumber>
    </recommendedName>
</protein>
<evidence type="ECO:0000255" key="1">
    <source>
        <dbReference type="HAMAP-Rule" id="MF_00083"/>
    </source>
</evidence>
<proteinExistence type="inferred from homology"/>
<feature type="chain" id="PRO_0000264030" description="Peptidyl-tRNA hydrolase">
    <location>
        <begin position="1"/>
        <end position="189"/>
    </location>
</feature>
<feature type="active site" description="Proton acceptor" evidence="1">
    <location>
        <position position="19"/>
    </location>
</feature>
<feature type="binding site" evidence="1">
    <location>
        <position position="14"/>
    </location>
    <ligand>
        <name>tRNA</name>
        <dbReference type="ChEBI" id="CHEBI:17843"/>
    </ligand>
</feature>
<feature type="binding site" evidence="1">
    <location>
        <position position="64"/>
    </location>
    <ligand>
        <name>tRNA</name>
        <dbReference type="ChEBI" id="CHEBI:17843"/>
    </ligand>
</feature>
<feature type="binding site" evidence="1">
    <location>
        <position position="66"/>
    </location>
    <ligand>
        <name>tRNA</name>
        <dbReference type="ChEBI" id="CHEBI:17843"/>
    </ligand>
</feature>
<feature type="binding site" evidence="1">
    <location>
        <position position="112"/>
    </location>
    <ligand>
        <name>tRNA</name>
        <dbReference type="ChEBI" id="CHEBI:17843"/>
    </ligand>
</feature>
<feature type="site" description="Discriminates between blocked and unblocked aminoacyl-tRNA" evidence="1">
    <location>
        <position position="9"/>
    </location>
</feature>
<feature type="site" description="Stabilizes the basic form of H active site to accept a proton" evidence="1">
    <location>
        <position position="91"/>
    </location>
</feature>
<reference key="1">
    <citation type="journal article" date="2005" name="Nat. Biotechnol.">
        <title>Genome sequence of the chlorinated compound-respiring bacterium Dehalococcoides species strain CBDB1.</title>
        <authorList>
            <person name="Kube M."/>
            <person name="Beck A."/>
            <person name="Zinder S.H."/>
            <person name="Kuhl H."/>
            <person name="Reinhardt R."/>
            <person name="Adrian L."/>
        </authorList>
    </citation>
    <scope>NUCLEOTIDE SEQUENCE [LARGE SCALE GENOMIC DNA]</scope>
    <source>
        <strain>CBDB1</strain>
    </source>
</reference>
<sequence>MKLIIGLGNPGKEYSGNRHNVGFQCLSRFAKENHISFDKKCCLSRTGSGRINDEEIVLAKPQTYMNLSGKAVNQLLRRYNLKATDIIVVQDDLDLPAGKLRLRLGGSAGGHNGVSSIITDIGTKEFIRLKIGIGKPDARNNGAEVVDHVLGNFGGEEREIIETAIARAAEALACLITSGLDTASNRFNC</sequence>
<dbReference type="EC" id="3.1.1.29" evidence="1"/>
<dbReference type="EMBL" id="AJ965256">
    <property type="protein sequence ID" value="CAI82758.1"/>
    <property type="molecule type" value="Genomic_DNA"/>
</dbReference>
<dbReference type="RefSeq" id="WP_011309109.1">
    <property type="nucleotide sequence ID" value="NC_007356.1"/>
</dbReference>
<dbReference type="SMR" id="Q3ZX09"/>
<dbReference type="KEGG" id="deh:cbdbA576"/>
<dbReference type="HOGENOM" id="CLU_062456_4_1_0"/>
<dbReference type="Proteomes" id="UP000000433">
    <property type="component" value="Chromosome"/>
</dbReference>
<dbReference type="GO" id="GO:0005737">
    <property type="term" value="C:cytoplasm"/>
    <property type="evidence" value="ECO:0007669"/>
    <property type="project" value="UniProtKB-SubCell"/>
</dbReference>
<dbReference type="GO" id="GO:0004045">
    <property type="term" value="F:peptidyl-tRNA hydrolase activity"/>
    <property type="evidence" value="ECO:0007669"/>
    <property type="project" value="UniProtKB-UniRule"/>
</dbReference>
<dbReference type="GO" id="GO:0000049">
    <property type="term" value="F:tRNA binding"/>
    <property type="evidence" value="ECO:0007669"/>
    <property type="project" value="UniProtKB-UniRule"/>
</dbReference>
<dbReference type="GO" id="GO:0006515">
    <property type="term" value="P:protein quality control for misfolded or incompletely synthesized proteins"/>
    <property type="evidence" value="ECO:0007669"/>
    <property type="project" value="UniProtKB-UniRule"/>
</dbReference>
<dbReference type="GO" id="GO:0072344">
    <property type="term" value="P:rescue of stalled ribosome"/>
    <property type="evidence" value="ECO:0007669"/>
    <property type="project" value="UniProtKB-UniRule"/>
</dbReference>
<dbReference type="CDD" id="cd00462">
    <property type="entry name" value="PTH"/>
    <property type="match status" value="1"/>
</dbReference>
<dbReference type="FunFam" id="3.40.50.1470:FF:000001">
    <property type="entry name" value="Peptidyl-tRNA hydrolase"/>
    <property type="match status" value="1"/>
</dbReference>
<dbReference type="Gene3D" id="3.40.50.1470">
    <property type="entry name" value="Peptidyl-tRNA hydrolase"/>
    <property type="match status" value="1"/>
</dbReference>
<dbReference type="HAMAP" id="MF_00083">
    <property type="entry name" value="Pept_tRNA_hydro_bact"/>
    <property type="match status" value="1"/>
</dbReference>
<dbReference type="InterPro" id="IPR001328">
    <property type="entry name" value="Pept_tRNA_hydro"/>
</dbReference>
<dbReference type="InterPro" id="IPR036416">
    <property type="entry name" value="Pept_tRNA_hydro_sf"/>
</dbReference>
<dbReference type="NCBIfam" id="TIGR00447">
    <property type="entry name" value="pth"/>
    <property type="match status" value="1"/>
</dbReference>
<dbReference type="PANTHER" id="PTHR17224">
    <property type="entry name" value="PEPTIDYL-TRNA HYDROLASE"/>
    <property type="match status" value="1"/>
</dbReference>
<dbReference type="PANTHER" id="PTHR17224:SF1">
    <property type="entry name" value="PEPTIDYL-TRNA HYDROLASE"/>
    <property type="match status" value="1"/>
</dbReference>
<dbReference type="Pfam" id="PF01195">
    <property type="entry name" value="Pept_tRNA_hydro"/>
    <property type="match status" value="1"/>
</dbReference>
<dbReference type="SUPFAM" id="SSF53178">
    <property type="entry name" value="Peptidyl-tRNA hydrolase-like"/>
    <property type="match status" value="1"/>
</dbReference>
<gene>
    <name evidence="1" type="primary">pth</name>
    <name type="ordered locus">cbdbA576</name>
</gene>
<keyword id="KW-0963">Cytoplasm</keyword>
<keyword id="KW-0378">Hydrolase</keyword>
<keyword id="KW-0694">RNA-binding</keyword>
<keyword id="KW-0820">tRNA-binding</keyword>
<organism>
    <name type="scientific">Dehalococcoides mccartyi (strain CBDB1)</name>
    <dbReference type="NCBI Taxonomy" id="255470"/>
    <lineage>
        <taxon>Bacteria</taxon>
        <taxon>Bacillati</taxon>
        <taxon>Chloroflexota</taxon>
        <taxon>Dehalococcoidia</taxon>
        <taxon>Dehalococcoidales</taxon>
        <taxon>Dehalococcoidaceae</taxon>
        <taxon>Dehalococcoides</taxon>
    </lineage>
</organism>